<sequence length="117" mass="14272">MKKVSWEKREKKKVAIERIDTLFTLAEKVVKYSPDLARRYVELALEIQKKSKVKLPRKWKRRYCKRCHAFLVPGFNARVRLRTDRMPHVVITCLECGHIMRYPYLREVKEKRKRKKD</sequence>
<organism>
    <name type="scientific">Pyrococcus abyssi (strain GE5 / Orsay)</name>
    <dbReference type="NCBI Taxonomy" id="272844"/>
    <lineage>
        <taxon>Archaea</taxon>
        <taxon>Methanobacteriati</taxon>
        <taxon>Methanobacteriota</taxon>
        <taxon>Thermococci</taxon>
        <taxon>Thermococcales</taxon>
        <taxon>Thermococcaceae</taxon>
        <taxon>Pyrococcus</taxon>
    </lineage>
</organism>
<dbReference type="EC" id="3.1.26.5" evidence="1"/>
<dbReference type="EMBL" id="AJ248284">
    <property type="protein sequence ID" value="CAB49484.1"/>
    <property type="molecule type" value="Genomic_DNA"/>
</dbReference>
<dbReference type="EMBL" id="HE613800">
    <property type="protein sequence ID" value="CCE69952.1"/>
    <property type="molecule type" value="Genomic_DNA"/>
</dbReference>
<dbReference type="PIR" id="E75175">
    <property type="entry name" value="E75175"/>
</dbReference>
<dbReference type="RefSeq" id="WP_010867686.1">
    <property type="nucleotide sequence ID" value="NC_000868.1"/>
</dbReference>
<dbReference type="SMR" id="Q9V166"/>
<dbReference type="STRING" id="272844.PAB0385"/>
<dbReference type="KEGG" id="pab:PAB0385"/>
<dbReference type="PATRIC" id="fig|272844.11.peg.598"/>
<dbReference type="eggNOG" id="arCOG04345">
    <property type="taxonomic scope" value="Archaea"/>
</dbReference>
<dbReference type="HOGENOM" id="CLU_079140_3_1_2"/>
<dbReference type="OrthoDB" id="10058at2157"/>
<dbReference type="PhylomeDB" id="Q9V166"/>
<dbReference type="Proteomes" id="UP000000810">
    <property type="component" value="Chromosome"/>
</dbReference>
<dbReference type="Proteomes" id="UP000009139">
    <property type="component" value="Chromosome"/>
</dbReference>
<dbReference type="GO" id="GO:0005737">
    <property type="term" value="C:cytoplasm"/>
    <property type="evidence" value="ECO:0007669"/>
    <property type="project" value="UniProtKB-SubCell"/>
</dbReference>
<dbReference type="GO" id="GO:0030677">
    <property type="term" value="C:ribonuclease P complex"/>
    <property type="evidence" value="ECO:0007669"/>
    <property type="project" value="UniProtKB-UniRule"/>
</dbReference>
<dbReference type="GO" id="GO:0004526">
    <property type="term" value="F:ribonuclease P activity"/>
    <property type="evidence" value="ECO:0007669"/>
    <property type="project" value="UniProtKB-UniRule"/>
</dbReference>
<dbReference type="GO" id="GO:0008270">
    <property type="term" value="F:zinc ion binding"/>
    <property type="evidence" value="ECO:0007669"/>
    <property type="project" value="UniProtKB-UniRule"/>
</dbReference>
<dbReference type="GO" id="GO:0001682">
    <property type="term" value="P:tRNA 5'-leader removal"/>
    <property type="evidence" value="ECO:0007669"/>
    <property type="project" value="UniProtKB-UniRule"/>
</dbReference>
<dbReference type="Gene3D" id="6.20.50.20">
    <property type="match status" value="1"/>
</dbReference>
<dbReference type="Gene3D" id="1.20.5.420">
    <property type="entry name" value="Immunoglobulin FC, subunit C"/>
    <property type="match status" value="1"/>
</dbReference>
<dbReference type="HAMAP" id="MF_00757">
    <property type="entry name" value="RNase_P_4"/>
    <property type="match status" value="1"/>
</dbReference>
<dbReference type="InterPro" id="IPR016432">
    <property type="entry name" value="RNP4"/>
</dbReference>
<dbReference type="InterPro" id="IPR007175">
    <property type="entry name" value="Rpr2/Snm1/Rpp21"/>
</dbReference>
<dbReference type="NCBIfam" id="NF003045">
    <property type="entry name" value="PRK03954.1"/>
    <property type="match status" value="1"/>
</dbReference>
<dbReference type="PANTHER" id="PTHR14742:SF0">
    <property type="entry name" value="RIBONUCLEASE P PROTEIN SUBUNIT P21"/>
    <property type="match status" value="1"/>
</dbReference>
<dbReference type="PANTHER" id="PTHR14742">
    <property type="entry name" value="RIBONUCLEASE P SUBUNIT P21"/>
    <property type="match status" value="1"/>
</dbReference>
<dbReference type="Pfam" id="PF04032">
    <property type="entry name" value="Rpr2"/>
    <property type="match status" value="1"/>
</dbReference>
<dbReference type="PIRSF" id="PIRSF004878">
    <property type="entry name" value="RNase_P_4"/>
    <property type="match status" value="1"/>
</dbReference>
<evidence type="ECO:0000255" key="1">
    <source>
        <dbReference type="HAMAP-Rule" id="MF_00757"/>
    </source>
</evidence>
<comment type="function">
    <text evidence="1">Part of ribonuclease P, a protein complex that generates mature tRNA molecules by cleaving their 5'-ends.</text>
</comment>
<comment type="catalytic activity">
    <reaction evidence="1">
        <text>Endonucleolytic cleavage of RNA, removing 5'-extranucleotides from tRNA precursor.</text>
        <dbReference type="EC" id="3.1.26.5"/>
    </reaction>
</comment>
<comment type="cofactor">
    <cofactor evidence="1">
        <name>Zn(2+)</name>
        <dbReference type="ChEBI" id="CHEBI:29105"/>
    </cofactor>
    <text evidence="1">Binds 1 zinc ion per subunit.</text>
</comment>
<comment type="subunit">
    <text evidence="1">Consists of a catalytic RNA component and at least 4-5 protein subunits.</text>
</comment>
<comment type="subcellular location">
    <subcellularLocation>
        <location evidence="1">Cytoplasm</location>
    </subcellularLocation>
</comment>
<comment type="similarity">
    <text evidence="1">Belongs to the eukaryotic/archaeal RNase P protein component 4 family.</text>
</comment>
<proteinExistence type="inferred from homology"/>
<reference key="1">
    <citation type="journal article" date="2003" name="Mol. Microbiol.">
        <title>An integrated analysis of the genome of the hyperthermophilic archaeon Pyrococcus abyssi.</title>
        <authorList>
            <person name="Cohen G.N."/>
            <person name="Barbe V."/>
            <person name="Flament D."/>
            <person name="Galperin M."/>
            <person name="Heilig R."/>
            <person name="Lecompte O."/>
            <person name="Poch O."/>
            <person name="Prieur D."/>
            <person name="Querellou J."/>
            <person name="Ripp R."/>
            <person name="Thierry J.-C."/>
            <person name="Van der Oost J."/>
            <person name="Weissenbach J."/>
            <person name="Zivanovic Y."/>
            <person name="Forterre P."/>
        </authorList>
    </citation>
    <scope>NUCLEOTIDE SEQUENCE [LARGE SCALE GENOMIC DNA]</scope>
    <source>
        <strain>GE5 / Orsay</strain>
    </source>
</reference>
<reference key="2">
    <citation type="journal article" date="2012" name="Curr. Microbiol.">
        <title>Re-annotation of two hyperthermophilic archaea Pyrococcus abyssi GE5 and Pyrococcus furiosus DSM 3638.</title>
        <authorList>
            <person name="Gao J."/>
            <person name="Wang J."/>
        </authorList>
    </citation>
    <scope>GENOME REANNOTATION</scope>
    <source>
        <strain>GE5 / Orsay</strain>
    </source>
</reference>
<protein>
    <recommendedName>
        <fullName evidence="1">Ribonuclease P protein component 4</fullName>
        <shortName evidence="1">RNase P component 4</shortName>
        <ecNumber evidence="1">3.1.26.5</ecNumber>
    </recommendedName>
    <alternativeName>
        <fullName evidence="1">Rpp21</fullName>
    </alternativeName>
</protein>
<keyword id="KW-0963">Cytoplasm</keyword>
<keyword id="KW-0255">Endonuclease</keyword>
<keyword id="KW-0378">Hydrolase</keyword>
<keyword id="KW-0479">Metal-binding</keyword>
<keyword id="KW-0540">Nuclease</keyword>
<keyword id="KW-0819">tRNA processing</keyword>
<keyword id="KW-0862">Zinc</keyword>
<gene>
    <name evidence="1" type="primary">rnp4</name>
    <name type="ordered locus">PYRAB05620</name>
    <name type="ORF">PAB0385</name>
</gene>
<name>RNP4_PYRAB</name>
<feature type="chain" id="PRO_0000153858" description="Ribonuclease P protein component 4">
    <location>
        <begin position="1"/>
        <end position="117"/>
    </location>
</feature>
<feature type="binding site" evidence="1">
    <location>
        <position position="64"/>
    </location>
    <ligand>
        <name>Zn(2+)</name>
        <dbReference type="ChEBI" id="CHEBI:29105"/>
    </ligand>
</feature>
<feature type="binding site" evidence="1">
    <location>
        <position position="67"/>
    </location>
    <ligand>
        <name>Zn(2+)</name>
        <dbReference type="ChEBI" id="CHEBI:29105"/>
    </ligand>
</feature>
<feature type="binding site" evidence="1">
    <location>
        <position position="93"/>
    </location>
    <ligand>
        <name>Zn(2+)</name>
        <dbReference type="ChEBI" id="CHEBI:29105"/>
    </ligand>
</feature>
<feature type="binding site" evidence="1">
    <location>
        <position position="96"/>
    </location>
    <ligand>
        <name>Zn(2+)</name>
        <dbReference type="ChEBI" id="CHEBI:29105"/>
    </ligand>
</feature>
<accession>Q9V166</accession>
<accession>G8ZJ25</accession>